<accession>B7M559</accession>
<gene>
    <name evidence="1" type="primary">mnmE</name>
    <name evidence="1" type="synonym">trmE</name>
    <name type="ordered locus">ECIAI1_3886</name>
</gene>
<reference key="1">
    <citation type="journal article" date="2009" name="PLoS Genet.">
        <title>Organised genome dynamics in the Escherichia coli species results in highly diverse adaptive paths.</title>
        <authorList>
            <person name="Touchon M."/>
            <person name="Hoede C."/>
            <person name="Tenaillon O."/>
            <person name="Barbe V."/>
            <person name="Baeriswyl S."/>
            <person name="Bidet P."/>
            <person name="Bingen E."/>
            <person name="Bonacorsi S."/>
            <person name="Bouchier C."/>
            <person name="Bouvet O."/>
            <person name="Calteau A."/>
            <person name="Chiapello H."/>
            <person name="Clermont O."/>
            <person name="Cruveiller S."/>
            <person name="Danchin A."/>
            <person name="Diard M."/>
            <person name="Dossat C."/>
            <person name="Karoui M.E."/>
            <person name="Frapy E."/>
            <person name="Garry L."/>
            <person name="Ghigo J.M."/>
            <person name="Gilles A.M."/>
            <person name="Johnson J."/>
            <person name="Le Bouguenec C."/>
            <person name="Lescat M."/>
            <person name="Mangenot S."/>
            <person name="Martinez-Jehanne V."/>
            <person name="Matic I."/>
            <person name="Nassif X."/>
            <person name="Oztas S."/>
            <person name="Petit M.A."/>
            <person name="Pichon C."/>
            <person name="Rouy Z."/>
            <person name="Ruf C.S."/>
            <person name="Schneider D."/>
            <person name="Tourret J."/>
            <person name="Vacherie B."/>
            <person name="Vallenet D."/>
            <person name="Medigue C."/>
            <person name="Rocha E.P.C."/>
            <person name="Denamur E."/>
        </authorList>
    </citation>
    <scope>NUCLEOTIDE SEQUENCE [LARGE SCALE GENOMIC DNA]</scope>
    <source>
        <strain>IAI1</strain>
    </source>
</reference>
<proteinExistence type="inferred from homology"/>
<organism>
    <name type="scientific">Escherichia coli O8 (strain IAI1)</name>
    <dbReference type="NCBI Taxonomy" id="585034"/>
    <lineage>
        <taxon>Bacteria</taxon>
        <taxon>Pseudomonadati</taxon>
        <taxon>Pseudomonadota</taxon>
        <taxon>Gammaproteobacteria</taxon>
        <taxon>Enterobacterales</taxon>
        <taxon>Enterobacteriaceae</taxon>
        <taxon>Escherichia</taxon>
    </lineage>
</organism>
<sequence length="454" mass="49231">MSDNDTIVAQATPPGRGGVGILRISGFKAREVAETVLGKLPKPRYADYLPFKDADGSVLDQGIALWFPGPNSFTGEDVLELQGHGGPVILDLLLKRILTIPGLRIARPGEFSERAFLNDKLDLAQAEAIADLIDASSEQAARSALNSLQGAFSARVNHLVEALTHLRIYVEAAIDFPDEEIDFLSDGKIEAQLNDVIADLDAVRAEARQGSLLREGMKVVIAGRPNAGKSSLLNALAGREAAIVTDIAGTTRDVLREHIHIDGMPLHIIDTAGLREASDEVERIGIERAWQEIEQADRVLFMVDGTTTDAVDPAEIWPEFIARLPAKLPITVVRNKADITGETLGMSEVNGHALIRLSARTGEGVDVLRNHLKQSMGFDTNMEGGFLARRRHLQALEQAAEHLQQGKAQLLGAWAGELLAEELRLAQQNLSEITGEFTSDDLLGRIFSSFCIGK</sequence>
<dbReference type="EC" id="3.6.-.-" evidence="1"/>
<dbReference type="EMBL" id="CU928160">
    <property type="protein sequence ID" value="CAR00681.1"/>
    <property type="molecule type" value="Genomic_DNA"/>
</dbReference>
<dbReference type="RefSeq" id="WP_001282346.1">
    <property type="nucleotide sequence ID" value="NC_011741.1"/>
</dbReference>
<dbReference type="SMR" id="B7M559"/>
<dbReference type="GeneID" id="86861818"/>
<dbReference type="KEGG" id="ecr:ECIAI1_3886"/>
<dbReference type="HOGENOM" id="CLU_019624_4_1_6"/>
<dbReference type="GO" id="GO:0005829">
    <property type="term" value="C:cytosol"/>
    <property type="evidence" value="ECO:0007669"/>
    <property type="project" value="TreeGrafter"/>
</dbReference>
<dbReference type="GO" id="GO:0005525">
    <property type="term" value="F:GTP binding"/>
    <property type="evidence" value="ECO:0007669"/>
    <property type="project" value="UniProtKB-UniRule"/>
</dbReference>
<dbReference type="GO" id="GO:0003924">
    <property type="term" value="F:GTPase activity"/>
    <property type="evidence" value="ECO:0007669"/>
    <property type="project" value="UniProtKB-UniRule"/>
</dbReference>
<dbReference type="GO" id="GO:0046872">
    <property type="term" value="F:metal ion binding"/>
    <property type="evidence" value="ECO:0007669"/>
    <property type="project" value="UniProtKB-KW"/>
</dbReference>
<dbReference type="GO" id="GO:0030488">
    <property type="term" value="P:tRNA methylation"/>
    <property type="evidence" value="ECO:0007669"/>
    <property type="project" value="TreeGrafter"/>
</dbReference>
<dbReference type="GO" id="GO:0002098">
    <property type="term" value="P:tRNA wobble uridine modification"/>
    <property type="evidence" value="ECO:0007669"/>
    <property type="project" value="TreeGrafter"/>
</dbReference>
<dbReference type="CDD" id="cd04164">
    <property type="entry name" value="trmE"/>
    <property type="match status" value="1"/>
</dbReference>
<dbReference type="CDD" id="cd14858">
    <property type="entry name" value="TrmE_N"/>
    <property type="match status" value="1"/>
</dbReference>
<dbReference type="FunFam" id="3.30.1360.120:FF:000001">
    <property type="entry name" value="tRNA modification GTPase MnmE"/>
    <property type="match status" value="1"/>
</dbReference>
<dbReference type="FunFam" id="3.40.50.300:FF:000249">
    <property type="entry name" value="tRNA modification GTPase MnmE"/>
    <property type="match status" value="1"/>
</dbReference>
<dbReference type="Gene3D" id="3.40.50.300">
    <property type="entry name" value="P-loop containing nucleotide triphosphate hydrolases"/>
    <property type="match status" value="1"/>
</dbReference>
<dbReference type="Gene3D" id="3.30.1360.120">
    <property type="entry name" value="Probable tRNA modification gtpase trme, domain 1"/>
    <property type="match status" value="1"/>
</dbReference>
<dbReference type="Gene3D" id="1.20.120.430">
    <property type="entry name" value="tRNA modification GTPase MnmE domain 2"/>
    <property type="match status" value="1"/>
</dbReference>
<dbReference type="HAMAP" id="MF_00379">
    <property type="entry name" value="GTPase_MnmE"/>
    <property type="match status" value="1"/>
</dbReference>
<dbReference type="InterPro" id="IPR031168">
    <property type="entry name" value="G_TrmE"/>
</dbReference>
<dbReference type="InterPro" id="IPR006073">
    <property type="entry name" value="GTP-bd"/>
</dbReference>
<dbReference type="InterPro" id="IPR018948">
    <property type="entry name" value="GTP-bd_TrmE_N"/>
</dbReference>
<dbReference type="InterPro" id="IPR004520">
    <property type="entry name" value="GTPase_MnmE"/>
</dbReference>
<dbReference type="InterPro" id="IPR027368">
    <property type="entry name" value="MnmE_dom2"/>
</dbReference>
<dbReference type="InterPro" id="IPR025867">
    <property type="entry name" value="MnmE_helical"/>
</dbReference>
<dbReference type="InterPro" id="IPR027417">
    <property type="entry name" value="P-loop_NTPase"/>
</dbReference>
<dbReference type="InterPro" id="IPR005225">
    <property type="entry name" value="Small_GTP-bd"/>
</dbReference>
<dbReference type="InterPro" id="IPR027266">
    <property type="entry name" value="TrmE/GcvT_dom1"/>
</dbReference>
<dbReference type="NCBIfam" id="TIGR00450">
    <property type="entry name" value="mnmE_trmE_thdF"/>
    <property type="match status" value="1"/>
</dbReference>
<dbReference type="NCBIfam" id="NF003661">
    <property type="entry name" value="PRK05291.1-3"/>
    <property type="match status" value="1"/>
</dbReference>
<dbReference type="NCBIfam" id="TIGR00231">
    <property type="entry name" value="small_GTP"/>
    <property type="match status" value="1"/>
</dbReference>
<dbReference type="PANTHER" id="PTHR42714">
    <property type="entry name" value="TRNA MODIFICATION GTPASE GTPBP3"/>
    <property type="match status" value="1"/>
</dbReference>
<dbReference type="PANTHER" id="PTHR42714:SF2">
    <property type="entry name" value="TRNA MODIFICATION GTPASE GTPBP3, MITOCHONDRIAL"/>
    <property type="match status" value="1"/>
</dbReference>
<dbReference type="Pfam" id="PF01926">
    <property type="entry name" value="MMR_HSR1"/>
    <property type="match status" value="1"/>
</dbReference>
<dbReference type="Pfam" id="PF12631">
    <property type="entry name" value="MnmE_helical"/>
    <property type="match status" value="1"/>
</dbReference>
<dbReference type="Pfam" id="PF10396">
    <property type="entry name" value="TrmE_N"/>
    <property type="match status" value="1"/>
</dbReference>
<dbReference type="SUPFAM" id="SSF52540">
    <property type="entry name" value="P-loop containing nucleoside triphosphate hydrolases"/>
    <property type="match status" value="1"/>
</dbReference>
<dbReference type="SUPFAM" id="SSF116878">
    <property type="entry name" value="TrmE connector domain"/>
    <property type="match status" value="1"/>
</dbReference>
<dbReference type="PROSITE" id="PS51709">
    <property type="entry name" value="G_TRME"/>
    <property type="match status" value="1"/>
</dbReference>
<protein>
    <recommendedName>
        <fullName evidence="1">tRNA modification GTPase MnmE</fullName>
        <ecNumber evidence="1">3.6.-.-</ecNumber>
    </recommendedName>
</protein>
<evidence type="ECO:0000255" key="1">
    <source>
        <dbReference type="HAMAP-Rule" id="MF_00379"/>
    </source>
</evidence>
<name>MNME_ECO8A</name>
<feature type="chain" id="PRO_1000197051" description="tRNA modification GTPase MnmE">
    <location>
        <begin position="1"/>
        <end position="454"/>
    </location>
</feature>
<feature type="domain" description="TrmE-type G">
    <location>
        <begin position="216"/>
        <end position="377"/>
    </location>
</feature>
<feature type="binding site" evidence="1">
    <location>
        <position position="23"/>
    </location>
    <ligand>
        <name>(6S)-5-formyl-5,6,7,8-tetrahydrofolate</name>
        <dbReference type="ChEBI" id="CHEBI:57457"/>
    </ligand>
</feature>
<feature type="binding site" evidence="1">
    <location>
        <position position="80"/>
    </location>
    <ligand>
        <name>(6S)-5-formyl-5,6,7,8-tetrahydrofolate</name>
        <dbReference type="ChEBI" id="CHEBI:57457"/>
    </ligand>
</feature>
<feature type="binding site" evidence="1">
    <location>
        <position position="120"/>
    </location>
    <ligand>
        <name>(6S)-5-formyl-5,6,7,8-tetrahydrofolate</name>
        <dbReference type="ChEBI" id="CHEBI:57457"/>
    </ligand>
</feature>
<feature type="binding site" evidence="1">
    <location>
        <begin position="226"/>
        <end position="231"/>
    </location>
    <ligand>
        <name>GTP</name>
        <dbReference type="ChEBI" id="CHEBI:37565"/>
    </ligand>
</feature>
<feature type="binding site" evidence="1">
    <location>
        <position position="226"/>
    </location>
    <ligand>
        <name>K(+)</name>
        <dbReference type="ChEBI" id="CHEBI:29103"/>
    </ligand>
</feature>
<feature type="binding site" evidence="1">
    <location>
        <position position="230"/>
    </location>
    <ligand>
        <name>Mg(2+)</name>
        <dbReference type="ChEBI" id="CHEBI:18420"/>
    </ligand>
</feature>
<feature type="binding site" evidence="1">
    <location>
        <begin position="245"/>
        <end position="251"/>
    </location>
    <ligand>
        <name>GTP</name>
        <dbReference type="ChEBI" id="CHEBI:37565"/>
    </ligand>
</feature>
<feature type="binding site" evidence="1">
    <location>
        <position position="245"/>
    </location>
    <ligand>
        <name>K(+)</name>
        <dbReference type="ChEBI" id="CHEBI:29103"/>
    </ligand>
</feature>
<feature type="binding site" evidence="1">
    <location>
        <position position="247"/>
    </location>
    <ligand>
        <name>K(+)</name>
        <dbReference type="ChEBI" id="CHEBI:29103"/>
    </ligand>
</feature>
<feature type="binding site" evidence="1">
    <location>
        <position position="250"/>
    </location>
    <ligand>
        <name>K(+)</name>
        <dbReference type="ChEBI" id="CHEBI:29103"/>
    </ligand>
</feature>
<feature type="binding site" evidence="1">
    <location>
        <position position="251"/>
    </location>
    <ligand>
        <name>Mg(2+)</name>
        <dbReference type="ChEBI" id="CHEBI:18420"/>
    </ligand>
</feature>
<feature type="binding site" evidence="1">
    <location>
        <begin position="270"/>
        <end position="273"/>
    </location>
    <ligand>
        <name>GTP</name>
        <dbReference type="ChEBI" id="CHEBI:37565"/>
    </ligand>
</feature>
<feature type="binding site" evidence="1">
    <location>
        <begin position="335"/>
        <end position="338"/>
    </location>
    <ligand>
        <name>GTP</name>
        <dbReference type="ChEBI" id="CHEBI:37565"/>
    </ligand>
</feature>
<feature type="binding site" evidence="1">
    <location>
        <begin position="358"/>
        <end position="360"/>
    </location>
    <ligand>
        <name>GTP</name>
        <dbReference type="ChEBI" id="CHEBI:37565"/>
    </ligand>
</feature>
<feature type="binding site" evidence="1">
    <location>
        <position position="454"/>
    </location>
    <ligand>
        <name>(6S)-5-formyl-5,6,7,8-tetrahydrofolate</name>
        <dbReference type="ChEBI" id="CHEBI:57457"/>
    </ligand>
</feature>
<keyword id="KW-0963">Cytoplasm</keyword>
<keyword id="KW-0342">GTP-binding</keyword>
<keyword id="KW-0378">Hydrolase</keyword>
<keyword id="KW-0460">Magnesium</keyword>
<keyword id="KW-0479">Metal-binding</keyword>
<keyword id="KW-0547">Nucleotide-binding</keyword>
<keyword id="KW-0630">Potassium</keyword>
<keyword id="KW-0819">tRNA processing</keyword>
<comment type="function">
    <text evidence="1">Exhibits a very high intrinsic GTPase hydrolysis rate. Involved in the addition of a carboxymethylaminomethyl (cmnm) group at the wobble position (U34) of certain tRNAs, forming tRNA-cmnm(5)s(2)U34.</text>
</comment>
<comment type="cofactor">
    <cofactor evidence="1">
        <name>K(+)</name>
        <dbReference type="ChEBI" id="CHEBI:29103"/>
    </cofactor>
    <text evidence="1">Binds 1 potassium ion per subunit.</text>
</comment>
<comment type="subunit">
    <text evidence="1">Homodimer. Heterotetramer of two MnmE and two MnmG subunits.</text>
</comment>
<comment type="subcellular location">
    <subcellularLocation>
        <location evidence="1">Cytoplasm</location>
    </subcellularLocation>
</comment>
<comment type="similarity">
    <text evidence="1">Belongs to the TRAFAC class TrmE-Era-EngA-EngB-Septin-like GTPase superfamily. TrmE GTPase family.</text>
</comment>